<gene>
    <name evidence="1" type="primary">mobA</name>
    <name type="ordered locus">SACOL2262</name>
</gene>
<proteinExistence type="inferred from homology"/>
<accession>Q5HDT8</accession>
<keyword id="KW-0963">Cytoplasm</keyword>
<keyword id="KW-0342">GTP-binding</keyword>
<keyword id="KW-0460">Magnesium</keyword>
<keyword id="KW-0479">Metal-binding</keyword>
<keyword id="KW-0501">Molybdenum cofactor biosynthesis</keyword>
<keyword id="KW-0547">Nucleotide-binding</keyword>
<keyword id="KW-0808">Transferase</keyword>
<organism>
    <name type="scientific">Staphylococcus aureus (strain COL)</name>
    <dbReference type="NCBI Taxonomy" id="93062"/>
    <lineage>
        <taxon>Bacteria</taxon>
        <taxon>Bacillati</taxon>
        <taxon>Bacillota</taxon>
        <taxon>Bacilli</taxon>
        <taxon>Bacillales</taxon>
        <taxon>Staphylococcaceae</taxon>
        <taxon>Staphylococcus</taxon>
    </lineage>
</organism>
<protein>
    <recommendedName>
        <fullName evidence="1">Probable molybdenum cofactor guanylyltransferase</fullName>
        <shortName evidence="1">MoCo guanylyltransferase</shortName>
        <ecNumber evidence="1">2.7.7.77</ecNumber>
    </recommendedName>
    <alternativeName>
        <fullName evidence="1">GTP:molybdopterin guanylyltransferase</fullName>
    </alternativeName>
    <alternativeName>
        <fullName evidence="1">Mo-MPT guanylyltransferase</fullName>
    </alternativeName>
    <alternativeName>
        <fullName evidence="1">Molybdopterin guanylyltransferase</fullName>
    </alternativeName>
    <alternativeName>
        <fullName evidence="1">Molybdopterin-guanine dinucleotide synthase</fullName>
        <shortName evidence="1">MGD synthase</shortName>
    </alternativeName>
</protein>
<comment type="function">
    <text evidence="1">Transfers a GMP moiety from GTP to Mo-molybdopterin (Mo-MPT) cofactor (Moco or molybdenum cofactor) to form Mo-molybdopterin guanine dinucleotide (Mo-MGD) cofactor.</text>
</comment>
<comment type="catalytic activity">
    <reaction evidence="1">
        <text>Mo-molybdopterin + GTP + H(+) = Mo-molybdopterin guanine dinucleotide + diphosphate</text>
        <dbReference type="Rhea" id="RHEA:34243"/>
        <dbReference type="ChEBI" id="CHEBI:15378"/>
        <dbReference type="ChEBI" id="CHEBI:33019"/>
        <dbReference type="ChEBI" id="CHEBI:37565"/>
        <dbReference type="ChEBI" id="CHEBI:71302"/>
        <dbReference type="ChEBI" id="CHEBI:71310"/>
        <dbReference type="EC" id="2.7.7.77"/>
    </reaction>
</comment>
<comment type="cofactor">
    <cofactor evidence="1">
        <name>Mg(2+)</name>
        <dbReference type="ChEBI" id="CHEBI:18420"/>
    </cofactor>
</comment>
<comment type="subcellular location">
    <subcellularLocation>
        <location evidence="1">Cytoplasm</location>
    </subcellularLocation>
</comment>
<comment type="domain">
    <text evidence="1">The N-terminal domain determines nucleotide recognition and specific binding, while the C-terminal domain determines the specific binding to the target protein.</text>
</comment>
<comment type="similarity">
    <text evidence="1">Belongs to the MobA family.</text>
</comment>
<feature type="chain" id="PRO_0000134911" description="Probable molybdenum cofactor guanylyltransferase">
    <location>
        <begin position="1"/>
        <end position="199"/>
    </location>
</feature>
<feature type="binding site" evidence="1">
    <location>
        <begin position="6"/>
        <end position="8"/>
    </location>
    <ligand>
        <name>GTP</name>
        <dbReference type="ChEBI" id="CHEBI:37565"/>
    </ligand>
</feature>
<feature type="binding site" evidence="1">
    <location>
        <position position="18"/>
    </location>
    <ligand>
        <name>GTP</name>
        <dbReference type="ChEBI" id="CHEBI:37565"/>
    </ligand>
</feature>
<feature type="binding site" evidence="1">
    <location>
        <position position="65"/>
    </location>
    <ligand>
        <name>GTP</name>
        <dbReference type="ChEBI" id="CHEBI:37565"/>
    </ligand>
</feature>
<feature type="binding site" evidence="1">
    <location>
        <position position="97"/>
    </location>
    <ligand>
        <name>GTP</name>
        <dbReference type="ChEBI" id="CHEBI:37565"/>
    </ligand>
</feature>
<feature type="binding site" evidence="1">
    <location>
        <position position="97"/>
    </location>
    <ligand>
        <name>Mg(2+)</name>
        <dbReference type="ChEBI" id="CHEBI:18420"/>
    </ligand>
</feature>
<evidence type="ECO:0000255" key="1">
    <source>
        <dbReference type="HAMAP-Rule" id="MF_00316"/>
    </source>
</evidence>
<reference key="1">
    <citation type="journal article" date="2005" name="J. Bacteriol.">
        <title>Insights on evolution of virulence and resistance from the complete genome analysis of an early methicillin-resistant Staphylococcus aureus strain and a biofilm-producing methicillin-resistant Staphylococcus epidermidis strain.</title>
        <authorList>
            <person name="Gill S.R."/>
            <person name="Fouts D.E."/>
            <person name="Archer G.L."/>
            <person name="Mongodin E.F."/>
            <person name="DeBoy R.T."/>
            <person name="Ravel J."/>
            <person name="Paulsen I.T."/>
            <person name="Kolonay J.F."/>
            <person name="Brinkac L.M."/>
            <person name="Beanan M.J."/>
            <person name="Dodson R.J."/>
            <person name="Daugherty S.C."/>
            <person name="Madupu R."/>
            <person name="Angiuoli S.V."/>
            <person name="Durkin A.S."/>
            <person name="Haft D.H."/>
            <person name="Vamathevan J.J."/>
            <person name="Khouri H."/>
            <person name="Utterback T.R."/>
            <person name="Lee C."/>
            <person name="Dimitrov G."/>
            <person name="Jiang L."/>
            <person name="Qin H."/>
            <person name="Weidman J."/>
            <person name="Tran K."/>
            <person name="Kang K.H."/>
            <person name="Hance I.R."/>
            <person name="Nelson K.E."/>
            <person name="Fraser C.M."/>
        </authorList>
    </citation>
    <scope>NUCLEOTIDE SEQUENCE [LARGE SCALE GENOMIC DNA]</scope>
    <source>
        <strain>COL</strain>
    </source>
</reference>
<sequence>MKAIILAGGHSVRFGKPKAFAEVNGETFYSRVIKTLESTNMFNEIIISTNAQLATQFKYPNVVIDDENHNDKGPLAGIYTIMKQHPEEELFFVVSVDTPMITGKAVSTLYQFLVSHLIENHLDVAAFKEDGRFIPTIAFYSPNALGAITKALHSDNYSFKNVYHELSTDYLDVRDVDAPSYWYKNINYQHDLDALIQKL</sequence>
<name>MOBA_STAAC</name>
<dbReference type="EC" id="2.7.7.77" evidence="1"/>
<dbReference type="EMBL" id="CP000046">
    <property type="protein sequence ID" value="AAW37134.1"/>
    <property type="molecule type" value="Genomic_DNA"/>
</dbReference>
<dbReference type="RefSeq" id="WP_000643988.1">
    <property type="nucleotide sequence ID" value="NZ_JBGOFO010000004.1"/>
</dbReference>
<dbReference type="SMR" id="Q5HDT8"/>
<dbReference type="KEGG" id="sac:SACOL2262"/>
<dbReference type="HOGENOM" id="CLU_055597_2_0_9"/>
<dbReference type="Proteomes" id="UP000000530">
    <property type="component" value="Chromosome"/>
</dbReference>
<dbReference type="GO" id="GO:0005737">
    <property type="term" value="C:cytoplasm"/>
    <property type="evidence" value="ECO:0007669"/>
    <property type="project" value="UniProtKB-SubCell"/>
</dbReference>
<dbReference type="GO" id="GO:0005525">
    <property type="term" value="F:GTP binding"/>
    <property type="evidence" value="ECO:0007669"/>
    <property type="project" value="UniProtKB-UniRule"/>
</dbReference>
<dbReference type="GO" id="GO:0046872">
    <property type="term" value="F:metal ion binding"/>
    <property type="evidence" value="ECO:0007669"/>
    <property type="project" value="UniProtKB-KW"/>
</dbReference>
<dbReference type="GO" id="GO:0061603">
    <property type="term" value="F:molybdenum cofactor guanylyltransferase activity"/>
    <property type="evidence" value="ECO:0007669"/>
    <property type="project" value="UniProtKB-EC"/>
</dbReference>
<dbReference type="GO" id="GO:0006777">
    <property type="term" value="P:Mo-molybdopterin cofactor biosynthetic process"/>
    <property type="evidence" value="ECO:0007669"/>
    <property type="project" value="UniProtKB-KW"/>
</dbReference>
<dbReference type="CDD" id="cd02503">
    <property type="entry name" value="MobA"/>
    <property type="match status" value="1"/>
</dbReference>
<dbReference type="Gene3D" id="3.90.550.10">
    <property type="entry name" value="Spore Coat Polysaccharide Biosynthesis Protein SpsA, Chain A"/>
    <property type="match status" value="1"/>
</dbReference>
<dbReference type="HAMAP" id="MF_00316">
    <property type="entry name" value="MobA"/>
    <property type="match status" value="1"/>
</dbReference>
<dbReference type="InterPro" id="IPR025877">
    <property type="entry name" value="MobA-like_NTP_Trfase"/>
</dbReference>
<dbReference type="InterPro" id="IPR013482">
    <property type="entry name" value="Molybde_CF_guanTrfase"/>
</dbReference>
<dbReference type="InterPro" id="IPR029044">
    <property type="entry name" value="Nucleotide-diphossugar_trans"/>
</dbReference>
<dbReference type="NCBIfam" id="NF001457">
    <property type="entry name" value="PRK00317.1-3"/>
    <property type="match status" value="1"/>
</dbReference>
<dbReference type="PANTHER" id="PTHR19136">
    <property type="entry name" value="MOLYBDENUM COFACTOR GUANYLYLTRANSFERASE"/>
    <property type="match status" value="1"/>
</dbReference>
<dbReference type="PANTHER" id="PTHR19136:SF81">
    <property type="entry name" value="MOLYBDENUM COFACTOR GUANYLYLTRANSFERASE"/>
    <property type="match status" value="1"/>
</dbReference>
<dbReference type="Pfam" id="PF12804">
    <property type="entry name" value="NTP_transf_3"/>
    <property type="match status" value="1"/>
</dbReference>
<dbReference type="SUPFAM" id="SSF53448">
    <property type="entry name" value="Nucleotide-diphospho-sugar transferases"/>
    <property type="match status" value="1"/>
</dbReference>